<dbReference type="EMBL" id="Z11165">
    <property type="protein sequence ID" value="CAA77521.1"/>
    <property type="molecule type" value="Genomic_DNA"/>
</dbReference>
<dbReference type="EMBL" id="K01183">
    <property type="status" value="NOT_ANNOTATED_CDS"/>
    <property type="molecule type" value="Genomic_DNA"/>
</dbReference>
<dbReference type="PIR" id="B28988">
    <property type="entry name" value="B28988"/>
</dbReference>
<dbReference type="RefSeq" id="WP_013066404.1">
    <property type="nucleotide sequence ID" value="NZ_JAOTPJ010000012.1"/>
</dbReference>
<dbReference type="SMR" id="P26176"/>
<dbReference type="TCDB" id="2.A.1.41.1">
    <property type="family name" value="the major facilitator superfamily (mfs)"/>
</dbReference>
<dbReference type="GeneID" id="31489606"/>
<dbReference type="OMA" id="WFGQLSD"/>
<dbReference type="GO" id="GO:0005886">
    <property type="term" value="C:plasma membrane"/>
    <property type="evidence" value="ECO:0007669"/>
    <property type="project" value="UniProtKB-SubCell"/>
</dbReference>
<dbReference type="GO" id="GO:0015979">
    <property type="term" value="P:photosynthesis"/>
    <property type="evidence" value="ECO:0007669"/>
    <property type="project" value="UniProtKB-KW"/>
</dbReference>
<dbReference type="CDD" id="cd06176">
    <property type="entry name" value="MFS_BCD_PucC-like"/>
    <property type="match status" value="1"/>
</dbReference>
<dbReference type="Gene3D" id="1.20.1250.20">
    <property type="entry name" value="MFS general substrate transporter like domains"/>
    <property type="match status" value="1"/>
</dbReference>
<dbReference type="InterPro" id="IPR036259">
    <property type="entry name" value="MFS_trans_sf"/>
</dbReference>
<dbReference type="InterPro" id="IPR026036">
    <property type="entry name" value="PucC"/>
</dbReference>
<dbReference type="InterPro" id="IPR004896">
    <property type="entry name" value="PucC-rel"/>
</dbReference>
<dbReference type="PANTHER" id="PTHR23538">
    <property type="entry name" value="44.5 KD BACTERIOCHLOROPHYLL SYNTHASE SUBUNIT"/>
    <property type="match status" value="1"/>
</dbReference>
<dbReference type="PANTHER" id="PTHR23538:SF1">
    <property type="entry name" value="44.5 KD BACTERIOCHLOROPHYLL SYNTHASE SUBUNIT"/>
    <property type="match status" value="1"/>
</dbReference>
<dbReference type="Pfam" id="PF03209">
    <property type="entry name" value="PUCC"/>
    <property type="match status" value="1"/>
</dbReference>
<dbReference type="PIRSF" id="PIRSF016565">
    <property type="entry name" value="PucC"/>
    <property type="match status" value="1"/>
</dbReference>
<dbReference type="SUPFAM" id="SSF103473">
    <property type="entry name" value="MFS general substrate transporter"/>
    <property type="match status" value="1"/>
</dbReference>
<sequence>MILSRRMIGSLAMTWLPFADAASETLPLRQLLRLSLFQVSVGMAQVLLLGTLNRVMILELGVPALVVAAMISIPVLVAPFRAILGHRSDTYRSALGWKRVPYLWFGSLWQMGGLALMPFSLILLSGDQTMGPAWAGEAFAGVAFLMAGVGMHMTQTAGLALAADRATEETRPQVVALLYVMFLIGMGISAVIVGWLLRDFDQITLIRVVQGCGAMTLVLNVIALWKQEVMRPMTKAEREAPRQSFREAWGLLAAETGALRLLATVMVGTLAFSMQDVLLEPYGGQVLGLKVGQTTWLTAGWAFGALVGFIWSARRLSQGAVAHRVAARGLLVGIVAFTAVLFSPLFGSKVLFFASAMGIGLGSGMFGIATLTVAMMVVVRGASGIALGAWGAAQATAAGLAVFIGGATRDLVAHAAAAGYLGSLHSPALGYTVVYVTEIGLLFITLAVLGPLVRPGSLFPKKPEAGEARIGLAEFPT</sequence>
<protein>
    <recommendedName>
        <fullName>Uncharacterized protein in puhA-bchM intergenic region</fullName>
    </recommendedName>
    <alternativeName>
        <fullName>ORF477</fullName>
    </alternativeName>
    <alternativeName>
        <fullName>Protein F1696</fullName>
    </alternativeName>
</protein>
<name>YPUM_RHOCA</name>
<comment type="subcellular location">
    <subcellularLocation>
        <location evidence="2">Cell membrane</location>
        <topology evidence="2">Multi-pass membrane protein</topology>
    </subcellularLocation>
</comment>
<comment type="similarity">
    <text evidence="2">Belongs to the PucC family.</text>
</comment>
<feature type="chain" id="PRO_0000066426" description="Uncharacterized protein in puhA-bchM intergenic region">
    <location>
        <begin position="1"/>
        <end position="477"/>
    </location>
</feature>
<feature type="transmembrane region" description="Helical" evidence="1">
    <location>
        <begin position="31"/>
        <end position="51"/>
    </location>
</feature>
<feature type="transmembrane region" description="Helical" evidence="1">
    <location>
        <begin position="60"/>
        <end position="80"/>
    </location>
</feature>
<feature type="transmembrane region" description="Helical" evidence="1">
    <location>
        <begin position="103"/>
        <end position="123"/>
    </location>
</feature>
<feature type="transmembrane region" description="Helical" evidence="1">
    <location>
        <begin position="130"/>
        <end position="150"/>
    </location>
</feature>
<feature type="transmembrane region" description="Helical" evidence="1">
    <location>
        <begin position="177"/>
        <end position="197"/>
    </location>
</feature>
<feature type="transmembrane region" description="Helical" evidence="1">
    <location>
        <begin position="205"/>
        <end position="225"/>
    </location>
</feature>
<feature type="transmembrane region" description="Helical" evidence="1">
    <location>
        <begin position="248"/>
        <end position="268"/>
    </location>
</feature>
<feature type="transmembrane region" description="Helical" evidence="1">
    <location>
        <begin position="291"/>
        <end position="311"/>
    </location>
</feature>
<feature type="transmembrane region" description="Helical" evidence="1">
    <location>
        <begin position="334"/>
        <end position="354"/>
    </location>
</feature>
<feature type="transmembrane region" description="Helical" evidence="1">
    <location>
        <begin position="359"/>
        <end position="379"/>
    </location>
</feature>
<feature type="transmembrane region" description="Helical" evidence="1">
    <location>
        <begin position="384"/>
        <end position="404"/>
    </location>
</feature>
<feature type="transmembrane region" description="Helical" evidence="1">
    <location>
        <begin position="433"/>
        <end position="453"/>
    </location>
</feature>
<reference key="1">
    <citation type="journal article" date="1984" name="Cell">
        <title>Nucleotide and deduced polypeptide sequences of the photosynthetic reaction-center, B870 antenna, and flanking polypeptides from R. capsulata.</title>
        <authorList>
            <person name="Youvan D.C."/>
            <person name="Bylina E.J."/>
            <person name="Alberti M."/>
            <person name="Begusch H."/>
            <person name="Hearst J.E."/>
        </authorList>
    </citation>
    <scope>NUCLEOTIDE SEQUENCE [GENOMIC DNA]</scope>
</reference>
<evidence type="ECO:0000255" key="1"/>
<evidence type="ECO:0000305" key="2"/>
<keyword id="KW-1003">Cell membrane</keyword>
<keyword id="KW-0472">Membrane</keyword>
<keyword id="KW-0602">Photosynthesis</keyword>
<keyword id="KW-0812">Transmembrane</keyword>
<keyword id="KW-1133">Transmembrane helix</keyword>
<proteinExistence type="inferred from homology"/>
<organism>
    <name type="scientific">Rhodobacter capsulatus</name>
    <name type="common">Rhodopseudomonas capsulata</name>
    <dbReference type="NCBI Taxonomy" id="1061"/>
    <lineage>
        <taxon>Bacteria</taxon>
        <taxon>Pseudomonadati</taxon>
        <taxon>Pseudomonadota</taxon>
        <taxon>Alphaproteobacteria</taxon>
        <taxon>Rhodobacterales</taxon>
        <taxon>Rhodobacter group</taxon>
        <taxon>Rhodobacter</taxon>
    </lineage>
</organism>
<accession>P26176</accession>